<evidence type="ECO:0000250" key="1">
    <source>
        <dbReference type="UniProtKB" id="B9KDD4"/>
    </source>
</evidence>
<evidence type="ECO:0000250" key="2">
    <source>
        <dbReference type="UniProtKB" id="O29867"/>
    </source>
</evidence>
<evidence type="ECO:0000255" key="3"/>
<evidence type="ECO:0000256" key="4">
    <source>
        <dbReference type="SAM" id="MobiDB-lite"/>
    </source>
</evidence>
<evidence type="ECO:0000269" key="5">
    <source>
    </source>
</evidence>
<evidence type="ECO:0000269" key="6">
    <source>
    </source>
</evidence>
<evidence type="ECO:0000305" key="7"/>
<evidence type="ECO:0000305" key="8">
    <source>
    </source>
</evidence>
<evidence type="ECO:0000305" key="9">
    <source>
    </source>
</evidence>
<organism>
    <name type="scientific">Haloferax volcanii (strain ATCC 29605 / DSM 3757 / JCM 8879 / NBRC 14742 / NCIMB 2012 / VKM B-1768 / DS2)</name>
    <name type="common">Halobacterium volcanii</name>
    <dbReference type="NCBI Taxonomy" id="309800"/>
    <lineage>
        <taxon>Archaea</taxon>
        <taxon>Methanobacteriati</taxon>
        <taxon>Methanobacteriota</taxon>
        <taxon>Stenosarchaea group</taxon>
        <taxon>Halobacteria</taxon>
        <taxon>Halobacteriales</taxon>
        <taxon>Haloferacaceae</taxon>
        <taxon>Haloferax</taxon>
    </lineage>
</organism>
<keyword id="KW-1003">Cell membrane</keyword>
<keyword id="KW-0328">Glycosyltransferase</keyword>
<keyword id="KW-0460">Magnesium</keyword>
<keyword id="KW-0464">Manganese</keyword>
<keyword id="KW-0472">Membrane</keyword>
<keyword id="KW-0479">Metal-binding</keyword>
<keyword id="KW-1185">Reference proteome</keyword>
<keyword id="KW-0808">Transferase</keyword>
<keyword id="KW-0812">Transmembrane</keyword>
<keyword id="KW-1133">Transmembrane helix</keyword>
<proteinExistence type="evidence at protein level"/>
<reference key="1">
    <citation type="journal article" date="2007" name="J. Mol. Biol.">
        <title>Haloferax volcanii AglB and AglD are involved in N-glycosylation of the S-layer glycoprotein and proper assembly of the surface layer.</title>
        <authorList>
            <person name="Abu-Qarn M."/>
            <person name="Yurist-Doutsch S."/>
            <person name="Giordana A."/>
            <person name="Trauner A."/>
            <person name="Morris H.R."/>
            <person name="Hitchen P."/>
            <person name="Medalia O."/>
            <person name="Dell A."/>
            <person name="Eichler J."/>
        </authorList>
    </citation>
    <scope>NUCLEOTIDE SEQUENCE [GENOMIC DNA]</scope>
    <scope>FUNCTION IN GLYCOSYLATION</scope>
    <scope>PATHWAY</scope>
    <scope>GENE NAME</scope>
    <source>
        <strain>DS2 / DS70</strain>
    </source>
</reference>
<reference key="2">
    <citation type="journal article" date="2010" name="PLoS ONE">
        <title>The complete genome sequence of Haloferax volcanii DS2, a model archaeon.</title>
        <authorList>
            <person name="Hartman A.L."/>
            <person name="Norais C."/>
            <person name="Badger J.H."/>
            <person name="Delmas S."/>
            <person name="Haldenby S."/>
            <person name="Madupu R."/>
            <person name="Robinson J."/>
            <person name="Khouri H."/>
            <person name="Ren Q."/>
            <person name="Lowe T.M."/>
            <person name="Maupin-Furlow J."/>
            <person name="Pohlschroder M."/>
            <person name="Daniels C."/>
            <person name="Pfeiffer F."/>
            <person name="Allers T."/>
            <person name="Eisen J.A."/>
        </authorList>
    </citation>
    <scope>NUCLEOTIDE SEQUENCE [LARGE SCALE GENOMIC DNA]</scope>
    <source>
        <strain>ATCC 29605 / DSM 3757 / JCM 8879 / NBRC 14742 / NCIMB 2012 / VKM B-1768 / DS2</strain>
    </source>
</reference>
<reference key="3">
    <citation type="journal article" date="2010" name="Mol. Microbiol.">
        <title>Distinct glycan-charged phosphodolichol carriers are required for the assembly of the pentasaccharide N-linked to the Haloferax volcanii S-layer glycoprotein.</title>
        <authorList>
            <person name="Guan Z."/>
            <person name="Naparstek S."/>
            <person name="Kaminski L."/>
            <person name="Konrad Z."/>
            <person name="Eichler J."/>
        </authorList>
    </citation>
    <scope>FUNCTION</scope>
    <scope>CATALYTIC ACTIVITY</scope>
</reference>
<reference key="4">
    <citation type="journal article" date="2012" name="J. Bacteriol.">
        <title>N-glycosylation of Haloferax volcanii flagellins requires known Agl proteins and is essential for biosynthesis of stable flagella.</title>
        <authorList>
            <person name="Tripepi M."/>
            <person name="You J."/>
            <person name="Temel S."/>
            <person name="Onder O."/>
            <person name="Brisson D."/>
            <person name="Pohlschroder M."/>
        </authorList>
    </citation>
    <scope>PROBABLE FUNCTION IN GLYCOSYLATION OF FLAGELLINS</scope>
    <source>
        <strain>H53</strain>
    </source>
</reference>
<reference key="5">
    <citation type="journal article" date="2016" name="J. Biol. Chem.">
        <title>Comparative analysis of archaeal lipid-linked oligosaccharides that serve as oligosaccharide donors for Asn glycosylation.</title>
        <authorList>
            <person name="Taguchi Y."/>
            <person name="Fujinami D."/>
            <person name="Kohda D."/>
        </authorList>
    </citation>
    <scope>COMPOSITION OF LIPID-LINKED OLIGOSACCHARIDE</scope>
</reference>
<accession>D4GYH4</accession>
<accession>A9JPF0</accession>
<feature type="chain" id="PRO_0000415386" description="Dolichyl-monophosphooligosaccharide--protein glycotransferase AglB">
    <location>
        <begin position="1"/>
        <end position="1054"/>
    </location>
</feature>
<feature type="topological domain" description="Cytoplasmic" evidence="7">
    <location>
        <begin position="1"/>
        <end position="14"/>
    </location>
</feature>
<feature type="transmembrane region" description="Helical" evidence="3">
    <location>
        <begin position="15"/>
        <end position="35"/>
    </location>
</feature>
<feature type="topological domain" description="Extracellular" evidence="7">
    <location>
        <begin position="36"/>
        <end position="118"/>
    </location>
</feature>
<feature type="transmembrane region" description="Helical" evidence="3">
    <location>
        <begin position="119"/>
        <end position="139"/>
    </location>
</feature>
<feature type="topological domain" description="Cytoplasmic" evidence="7">
    <location>
        <begin position="140"/>
        <end position="141"/>
    </location>
</feature>
<feature type="transmembrane region" description="Helical" evidence="3">
    <location>
        <begin position="142"/>
        <end position="162"/>
    </location>
</feature>
<feature type="topological domain" description="Extracellular" evidence="7">
    <location>
        <begin position="163"/>
        <end position="174"/>
    </location>
</feature>
<feature type="transmembrane region" description="Helical" evidence="3">
    <location>
        <begin position="175"/>
        <end position="195"/>
    </location>
</feature>
<feature type="topological domain" description="Cytoplasmic" evidence="7">
    <location>
        <begin position="196"/>
        <end position="215"/>
    </location>
</feature>
<feature type="transmembrane region" description="Helical" evidence="3">
    <location>
        <begin position="216"/>
        <end position="232"/>
    </location>
</feature>
<feature type="topological domain" description="Extracellular" evidence="7">
    <location>
        <begin position="233"/>
        <end position="237"/>
    </location>
</feature>
<feature type="transmembrane region" description="Helical" evidence="3">
    <location>
        <begin position="238"/>
        <end position="254"/>
    </location>
</feature>
<feature type="topological domain" description="Cytoplasmic" evidence="7">
    <location>
        <begin position="255"/>
        <end position="263"/>
    </location>
</feature>
<feature type="transmembrane region" description="Helical" evidence="3">
    <location>
        <begin position="264"/>
        <end position="284"/>
    </location>
</feature>
<feature type="topological domain" description="Extracellular" evidence="7">
    <location>
        <begin position="285"/>
        <end position="295"/>
    </location>
</feature>
<feature type="transmembrane region" description="Helical" evidence="3">
    <location>
        <begin position="296"/>
        <end position="316"/>
    </location>
</feature>
<feature type="topological domain" description="Cytoplasmic" evidence="7">
    <location>
        <begin position="317"/>
        <end position="331"/>
    </location>
</feature>
<feature type="transmembrane region" description="Helical" evidence="3">
    <location>
        <begin position="332"/>
        <end position="352"/>
    </location>
</feature>
<feature type="topological domain" description="Extracellular" evidence="7">
    <location>
        <begin position="353"/>
        <end position="396"/>
    </location>
</feature>
<feature type="transmembrane region" description="Helical" evidence="3">
    <location>
        <begin position="397"/>
        <end position="417"/>
    </location>
</feature>
<feature type="topological domain" description="Cytoplasmic" evidence="7">
    <location>
        <begin position="418"/>
        <end position="485"/>
    </location>
</feature>
<feature type="transmembrane region" description="Helical" evidence="3">
    <location>
        <begin position="486"/>
        <end position="506"/>
    </location>
</feature>
<feature type="transmembrane region" description="Helical" evidence="3">
    <location>
        <begin position="507"/>
        <end position="527"/>
    </location>
</feature>
<feature type="topological domain" description="Cytoplasmic" evidence="7">
    <location>
        <begin position="528"/>
        <end position="544"/>
    </location>
</feature>
<feature type="transmembrane region" description="Helical" evidence="3">
    <location>
        <begin position="545"/>
        <end position="565"/>
    </location>
</feature>
<feature type="topological domain" description="Extracellular" evidence="7">
    <location>
        <begin position="566"/>
        <end position="1054"/>
    </location>
</feature>
<feature type="region of interest" description="Interacts with target acceptor peptide in protein substrate" evidence="2">
    <location>
        <begin position="638"/>
        <end position="640"/>
    </location>
</feature>
<feature type="region of interest" description="Disordered" evidence="4">
    <location>
        <begin position="1005"/>
        <end position="1054"/>
    </location>
</feature>
<feature type="short sequence motif" description="DXD motif 1" evidence="2">
    <location>
        <begin position="53"/>
        <end position="55"/>
    </location>
</feature>
<feature type="short sequence motif" description="DXD motif 2" evidence="2">
    <location>
        <begin position="172"/>
        <end position="174"/>
    </location>
</feature>
<feature type="short sequence motif" description="TIXE motif" evidence="2">
    <location>
        <begin position="373"/>
        <end position="376"/>
    </location>
</feature>
<feature type="short sequence motif" description="WWDYG motif" evidence="2">
    <location>
        <begin position="638"/>
        <end position="642"/>
    </location>
</feature>
<feature type="short sequence motif" description="DKi motif" evidence="2">
    <location>
        <begin position="701"/>
        <end position="712"/>
    </location>
</feature>
<feature type="compositionally biased region" description="Acidic residues" evidence="4">
    <location>
        <begin position="1009"/>
        <end position="1027"/>
    </location>
</feature>
<feature type="compositionally biased region" description="Low complexity" evidence="4">
    <location>
        <begin position="1028"/>
        <end position="1054"/>
    </location>
</feature>
<feature type="binding site" evidence="2">
    <location>
        <position position="55"/>
    </location>
    <ligand>
        <name>Mn(2+)</name>
        <dbReference type="ChEBI" id="CHEBI:29035"/>
    </ligand>
</feature>
<feature type="binding site" evidence="2">
    <location>
        <position position="172"/>
    </location>
    <ligand>
        <name>Mn(2+)</name>
        <dbReference type="ChEBI" id="CHEBI:29035"/>
    </ligand>
</feature>
<feature type="binding site" evidence="2">
    <location>
        <position position="173"/>
    </location>
    <ligand>
        <name>a glycophospholipid</name>
        <dbReference type="ChEBI" id="CHEBI:24397"/>
        <note>archaeal dolichyl phosphooligosaccharide</note>
    </ligand>
</feature>
<feature type="binding site" evidence="2">
    <location>
        <position position="504"/>
    </location>
    <ligand>
        <name>a glycophospholipid</name>
        <dbReference type="ChEBI" id="CHEBI:24397"/>
        <note>archaeal dolichyl phosphooligosaccharide</note>
    </ligand>
</feature>
<feature type="site" description="Interacts with target acceptor peptide in protein substrate" evidence="2">
    <location>
        <position position="55"/>
    </location>
</feature>
<feature type="site" description="Important for catalytic activity" evidence="1">
    <location>
        <position position="165"/>
    </location>
</feature>
<feature type="site" description="Interacts with target acceptor peptide in protein substrate" evidence="2">
    <location>
        <position position="376"/>
    </location>
</feature>
<feature type="site" description="Interacts with target acceptor peptide in protein substrate" evidence="2">
    <location>
        <position position="708"/>
    </location>
</feature>
<gene>
    <name type="primary">aglB</name>
    <name type="ordered locus">HVO_1530</name>
</gene>
<protein>
    <recommendedName>
        <fullName>Dolichyl-monophosphooligosaccharide--protein glycotransferase AglB</fullName>
        <ecNumber evidence="6">2.4.99.21</ecNumber>
    </recommendedName>
    <alternativeName>
        <fullName>Archaeal glycosylation protein B</fullName>
    </alternativeName>
    <alternativeName>
        <fullName>Dolichyl-phosphooligosaccharide-protein glycotransferase</fullName>
    </alternativeName>
    <alternativeName>
        <fullName>Oligosaccharyl transferase</fullName>
        <shortName>OST</shortName>
        <shortName>OTase</shortName>
    </alternativeName>
    <alternativeName>
        <fullName>Oligosaccharyl transferase AglB</fullName>
    </alternativeName>
</protein>
<name>AGLB_HALVD</name>
<sequence length="1054" mass="113675">MSDEQTKYSPSIAELARDWYHIPVLSTIILVMLWIRLRSYDAFIREGTVFFSGNDAWYHLRQVEYTVRNWPATMPFDPWTEFPFGRTAGQFGTIYDQLVATAALVVGLGSPSSDLVAKSLLVAPAVFGALTVIPTYLIGKRLGGRLGGLFGAVILMLLPGTFLQRGLVGFADHNIVEPFFMGFAVLAIMIALTVADREKPVWELVAARDLDALREPLKWSVLAGVATAIYMWSWPPGILLVGIFGLFLVLKMASDYVRGRSPEHTAFVGAISMTVTGLLMFIPIEEPGFGVTDFGFLQPLFSLGVALGAVFLAALARWWESNDVDERYYPAVVGGTMLVGIVLFSLVLPSVFDSIARNFLRTVGFSAGAATRTISEAQPFLAANVLQSNGQTAVGRIMSEYGFTFFTGALAAVWLVAKPLVKGGNSRKIGYAVGSLALIGVLFLIPALPAGIGSALGVEPSLVSLTIVTALIVGAVMQADYESERLFVLVWAAIITSAAFTQVRFNYYLAVVVAVMNAYLLREALGIDFVGLANVERFDDISYGQVAAVVIAVLLILTPVLIIPIQLGNGGVSQTAMQASQTGPGTVTQWDGSLTWMQNNTPAEGEFGGESNRMEYYGTYEYTDDFDYPDGAYGVMSWWDYGHWITVLGERIPNANPFQGGATEAANYLLAEDEQQAESVLTSMGDDGEGDQTRYVMVDWQMASTDAKFSAPTVFYDESNISRSDFYNPMFRLQEQGEQTTVAAASSLKDQRYYESLMVRLYAYHGSAREASPIVVDWEERTSADGSTTFRVTPSDGQAVRTFDNMSAAEEYVANDPTSQIGGIGTFPEERVSALEHYRLVKSSNSSALRSGSYQRSLISEGNTYGLQPQALVPNNPAWVKTFERVPGATVDGSGAPANTTVTARVQMRDLTTGTNFTYTQQAQTDADGEFTMTLPYSTTGYDEYGPDNGYTNVSVRAAGGYAFTGPTSVTGNSTIVSYQAENVAVDEGLVNGAEDGTVQVTLERNEQELDLPGDSSSEDSSSEDGTSDGSQTNESASTSTSASVDASAVSAAA</sequence>
<dbReference type="EC" id="2.4.99.21" evidence="6"/>
<dbReference type="EMBL" id="AM922226">
    <property type="protein sequence ID" value="CAP58184.1"/>
    <property type="molecule type" value="Genomic_DNA"/>
</dbReference>
<dbReference type="EMBL" id="CP001956">
    <property type="protein sequence ID" value="ADE03209.1"/>
    <property type="molecule type" value="Genomic_DNA"/>
</dbReference>
<dbReference type="RefSeq" id="WP_013035363.1">
    <property type="nucleotide sequence ID" value="NC_013967.1"/>
</dbReference>
<dbReference type="SMR" id="D4GYH4"/>
<dbReference type="STRING" id="309800.HVO_1530"/>
<dbReference type="CAZy" id="GT66">
    <property type="family name" value="Glycosyltransferase Family 66"/>
</dbReference>
<dbReference type="TCDB" id="9.B.142.3.15">
    <property type="family name" value="the integral membrane glycosyltransferase family 39 (gt39) family"/>
</dbReference>
<dbReference type="PaxDb" id="309800-C498_03005"/>
<dbReference type="EnsemblBacteria" id="ADE03209">
    <property type="protein sequence ID" value="ADE03209"/>
    <property type="gene ID" value="HVO_1530"/>
</dbReference>
<dbReference type="GeneID" id="8923906"/>
<dbReference type="KEGG" id="hvo:HVO_1530"/>
<dbReference type="eggNOG" id="arCOG02043">
    <property type="taxonomic scope" value="Archaea"/>
</dbReference>
<dbReference type="HOGENOM" id="CLU_008803_0_0_2"/>
<dbReference type="OrthoDB" id="82393at2157"/>
<dbReference type="BioCyc" id="MetaCyc:MONOMER-19288"/>
<dbReference type="BRENDA" id="2.4.99.21">
    <property type="organism ID" value="2561"/>
</dbReference>
<dbReference type="UniPathway" id="UPA00378"/>
<dbReference type="UniPathway" id="UPA00977"/>
<dbReference type="Proteomes" id="UP000008243">
    <property type="component" value="Chromosome"/>
</dbReference>
<dbReference type="GO" id="GO:0005886">
    <property type="term" value="C:plasma membrane"/>
    <property type="evidence" value="ECO:0007669"/>
    <property type="project" value="UniProtKB-SubCell"/>
</dbReference>
<dbReference type="GO" id="GO:0016757">
    <property type="term" value="F:glycosyltransferase activity"/>
    <property type="evidence" value="ECO:0000314"/>
    <property type="project" value="UniProtKB"/>
</dbReference>
<dbReference type="GO" id="GO:0046872">
    <property type="term" value="F:metal ion binding"/>
    <property type="evidence" value="ECO:0007669"/>
    <property type="project" value="UniProtKB-KW"/>
</dbReference>
<dbReference type="GO" id="GO:0004576">
    <property type="term" value="F:oligosaccharyl transferase activity"/>
    <property type="evidence" value="ECO:0007669"/>
    <property type="project" value="InterPro"/>
</dbReference>
<dbReference type="GO" id="GO:0006486">
    <property type="term" value="P:protein glycosylation"/>
    <property type="evidence" value="ECO:0007669"/>
    <property type="project" value="UniProtKB-UniPathway"/>
</dbReference>
<dbReference type="GO" id="GO:0045232">
    <property type="term" value="P:S-layer organization"/>
    <property type="evidence" value="ECO:0000314"/>
    <property type="project" value="UniProtKB"/>
</dbReference>
<dbReference type="Gene3D" id="2.60.40.3390">
    <property type="match status" value="1"/>
</dbReference>
<dbReference type="Gene3D" id="3.40.50.12610">
    <property type="match status" value="1"/>
</dbReference>
<dbReference type="InterPro" id="IPR054479">
    <property type="entry name" value="AglB-like_core"/>
</dbReference>
<dbReference type="InterPro" id="IPR041154">
    <property type="entry name" value="AglB_P1"/>
</dbReference>
<dbReference type="InterPro" id="IPR003674">
    <property type="entry name" value="Oligo_trans_STT3"/>
</dbReference>
<dbReference type="InterPro" id="IPR026410">
    <property type="entry name" value="OlisacTrfase_arch"/>
</dbReference>
<dbReference type="InterPro" id="IPR048307">
    <property type="entry name" value="STT3_N"/>
</dbReference>
<dbReference type="NCBIfam" id="TIGR04154">
    <property type="entry name" value="archaeo_STT3"/>
    <property type="match status" value="1"/>
</dbReference>
<dbReference type="PANTHER" id="PTHR13872">
    <property type="entry name" value="DOLICHYL-DIPHOSPHOOLIGOSACCHARIDE--PROTEIN GLYCOSYLTRANSFERASE SUBUNIT"/>
    <property type="match status" value="1"/>
</dbReference>
<dbReference type="PANTHER" id="PTHR13872:SF1">
    <property type="entry name" value="DOLICHYL-DIPHOSPHOOLIGOSACCHARIDE--PROTEIN GLYCOSYLTRANSFERASE SUBUNIT STT3B"/>
    <property type="match status" value="1"/>
</dbReference>
<dbReference type="Pfam" id="PF22627">
    <property type="entry name" value="AglB_core-like"/>
    <property type="match status" value="1"/>
</dbReference>
<dbReference type="Pfam" id="PF18079">
    <property type="entry name" value="AglB_L1"/>
    <property type="match status" value="1"/>
</dbReference>
<dbReference type="Pfam" id="PF02516">
    <property type="entry name" value="STT3"/>
    <property type="match status" value="1"/>
</dbReference>
<comment type="function">
    <text evidence="5 6 8 9">Oligosaccharyl transferase (OST) that catalyzes the initial transfer of a defined glycan (a hexose-linked tetrasaccharide composed of a hexose, 2 hexuronic acids and a methyl ester of hexuronic acid in H.volcanii) from the lipid carrier dolichol-monophosphate to an asparagine residue within an Asn-X-Ser/Thr consensus motif in nascent polypeptide chains, the first step in protein N-glycosylation (Probable). Involved in the assembly of an N-linked pentasaccharide that decorates the S-layer glycoprotein and flagellins (Probable) (PubMed:17996897, PubMed:21091511).</text>
</comment>
<comment type="catalytic activity">
    <reaction evidence="6">
        <text>an archaeal dolichyl phosphooligosaccharide + [protein]-L-asparagine = an archaeal dolichyl phosphate + a glycoprotein with the oligosaccharide chain attached by N-beta-D-glycosyl linkage to a protein L-asparagine.</text>
        <dbReference type="EC" id="2.4.99.21"/>
    </reaction>
</comment>
<comment type="cofactor">
    <cofactor evidence="2">
        <name>Mg(2+)</name>
        <dbReference type="ChEBI" id="CHEBI:18420"/>
    </cofactor>
    <cofactor evidence="2">
        <name>Mn(2+)</name>
        <dbReference type="ChEBI" id="CHEBI:29035"/>
    </cofactor>
</comment>
<comment type="pathway">
    <text evidence="5">Cell surface structure biogenesis; S-layer biogenesis.</text>
</comment>
<comment type="pathway">
    <text evidence="5">Protein modification; protein glycosylation.</text>
</comment>
<comment type="subcellular location">
    <subcellularLocation>
        <location evidence="7">Cell membrane</location>
        <topology evidence="7">Multi-pass membrane protein</topology>
    </subcellularLocation>
</comment>
<comment type="domain">
    <text evidence="2">Despite low primary sequence conservation between eukaryotic catalytic subunits and bacterial and archaeal single subunit OSTs (ssOST), structural comparison revealed several common motifs at spatially equivalent positions, like the DXD motif 1 on the external loop 1 and the DXD motif 2 on the external loop 2 involved in binding of the metal ion cofactor and the carboxamide group of the acceptor asparagine, the conserved Glu residue of the TIXE/SVSE motif on the external loop 5 involved in catalysis, as well as the WWDYG and the DK/MI motifs in the globular domain that define the binding pocket for the +2 Ser/Thr of the acceptor sequon. In bacterial ssOSTs, an Arg residue was found to interact with a negatively charged side chain at the -2 position of the sequon. This Arg is conserved in bacterial enzymes and correlates with an extended sequon requirement (Asp-X-Asn-X-Ser/Thr) for bacterial N-glycosylation.</text>
</comment>
<comment type="similarity">
    <text evidence="7">Belongs to the STT3 family.</text>
</comment>